<evidence type="ECO:0000255" key="1">
    <source>
        <dbReference type="HAMAP-Rule" id="MF_01328"/>
    </source>
</evidence>
<evidence type="ECO:0000256" key="2">
    <source>
        <dbReference type="SAM" id="MobiDB-lite"/>
    </source>
</evidence>
<evidence type="ECO:0000305" key="3"/>
<keyword id="KW-0687">Ribonucleoprotein</keyword>
<keyword id="KW-0689">Ribosomal protein</keyword>
<keyword id="KW-0694">RNA-binding</keyword>
<keyword id="KW-0699">rRNA-binding</keyword>
<protein>
    <recommendedName>
        <fullName evidence="1">Large ribosomal subunit protein uL4</fullName>
    </recommendedName>
    <alternativeName>
        <fullName evidence="3">50S ribosomal protein L4</fullName>
    </alternativeName>
</protein>
<comment type="function">
    <text evidence="1">One of the primary rRNA binding proteins, this protein initially binds near the 5'-end of the 23S rRNA. It is important during the early stages of 50S assembly. It makes multiple contacts with different domains of the 23S rRNA in the assembled 50S subunit and ribosome.</text>
</comment>
<comment type="function">
    <text evidence="1">Forms part of the polypeptide exit tunnel.</text>
</comment>
<comment type="subunit">
    <text evidence="1">Part of the 50S ribosomal subunit.</text>
</comment>
<comment type="similarity">
    <text evidence="1">Belongs to the universal ribosomal protein uL4 family.</text>
</comment>
<organism>
    <name type="scientific">Burkholderia ambifaria (strain ATCC BAA-244 / DSM 16087 / CCUG 44356 / LMG 19182 / AMMD)</name>
    <name type="common">Burkholderia cepacia (strain AMMD)</name>
    <dbReference type="NCBI Taxonomy" id="339670"/>
    <lineage>
        <taxon>Bacteria</taxon>
        <taxon>Pseudomonadati</taxon>
        <taxon>Pseudomonadota</taxon>
        <taxon>Betaproteobacteria</taxon>
        <taxon>Burkholderiales</taxon>
        <taxon>Burkholderiaceae</taxon>
        <taxon>Burkholderia</taxon>
        <taxon>Burkholderia cepacia complex</taxon>
    </lineage>
</organism>
<feature type="chain" id="PRO_1000052366" description="Large ribosomal subunit protein uL4">
    <location>
        <begin position="1"/>
        <end position="206"/>
    </location>
</feature>
<feature type="region of interest" description="Disordered" evidence="2">
    <location>
        <begin position="45"/>
        <end position="78"/>
    </location>
</feature>
<feature type="compositionally biased region" description="Basic residues" evidence="2">
    <location>
        <begin position="58"/>
        <end position="70"/>
    </location>
</feature>
<proteinExistence type="inferred from homology"/>
<accession>Q0BJ45</accession>
<gene>
    <name evidence="1" type="primary">rplD</name>
    <name type="ordered locus">Bamb_0268</name>
</gene>
<sequence length="206" mass="22994">MELKLLNENGQEGAVVNASDVVFGRDYNEALIHQVVVAYQANARQGNRAQKDREQVKHTTKKPWRQKGTGRARAGMSSSPLWRGGGRIFPNSPEENFSHKVNKKMHRAGLCSIFSQLAREGRLSVVEDIILEAPKTKLLADKFKTMGLDSVLIITDTVDENLYLASRNLPHVAIVEPRYADPLSLIYFKKVLVTKAAVAQIEELLS</sequence>
<reference key="1">
    <citation type="submission" date="2006-08" db="EMBL/GenBank/DDBJ databases">
        <title>Complete sequence of chromosome 1 of Burkholderia cepacia AMMD.</title>
        <authorList>
            <person name="Copeland A."/>
            <person name="Lucas S."/>
            <person name="Lapidus A."/>
            <person name="Barry K."/>
            <person name="Detter J.C."/>
            <person name="Glavina del Rio T."/>
            <person name="Hammon N."/>
            <person name="Israni S."/>
            <person name="Pitluck S."/>
            <person name="Bruce D."/>
            <person name="Chain P."/>
            <person name="Malfatti S."/>
            <person name="Shin M."/>
            <person name="Vergez L."/>
            <person name="Schmutz J."/>
            <person name="Larimer F."/>
            <person name="Land M."/>
            <person name="Hauser L."/>
            <person name="Kyrpides N."/>
            <person name="Kim E."/>
            <person name="Parke J."/>
            <person name="Coenye T."/>
            <person name="Konstantinidis K."/>
            <person name="Ramette A."/>
            <person name="Tiedje J."/>
            <person name="Richardson P."/>
        </authorList>
    </citation>
    <scope>NUCLEOTIDE SEQUENCE [LARGE SCALE GENOMIC DNA]</scope>
    <source>
        <strain>ATCC BAA-244 / DSM 16087 / CCUG 44356 / LMG 19182 / AMMD</strain>
    </source>
</reference>
<name>RL4_BURCM</name>
<dbReference type="EMBL" id="CP000440">
    <property type="protein sequence ID" value="ABI85828.1"/>
    <property type="molecule type" value="Genomic_DNA"/>
</dbReference>
<dbReference type="RefSeq" id="WP_006477192.1">
    <property type="nucleotide sequence ID" value="NZ_CP009798.1"/>
</dbReference>
<dbReference type="SMR" id="Q0BJ45"/>
<dbReference type="GeneID" id="93084317"/>
<dbReference type="KEGG" id="bam:Bamb_0268"/>
<dbReference type="PATRIC" id="fig|339670.21.peg.1352"/>
<dbReference type="eggNOG" id="COG0088">
    <property type="taxonomic scope" value="Bacteria"/>
</dbReference>
<dbReference type="Proteomes" id="UP000000662">
    <property type="component" value="Chromosome 1"/>
</dbReference>
<dbReference type="GO" id="GO:1990904">
    <property type="term" value="C:ribonucleoprotein complex"/>
    <property type="evidence" value="ECO:0007669"/>
    <property type="project" value="UniProtKB-KW"/>
</dbReference>
<dbReference type="GO" id="GO:0005840">
    <property type="term" value="C:ribosome"/>
    <property type="evidence" value="ECO:0007669"/>
    <property type="project" value="UniProtKB-KW"/>
</dbReference>
<dbReference type="GO" id="GO:0019843">
    <property type="term" value="F:rRNA binding"/>
    <property type="evidence" value="ECO:0007669"/>
    <property type="project" value="UniProtKB-UniRule"/>
</dbReference>
<dbReference type="GO" id="GO:0003735">
    <property type="term" value="F:structural constituent of ribosome"/>
    <property type="evidence" value="ECO:0007669"/>
    <property type="project" value="InterPro"/>
</dbReference>
<dbReference type="GO" id="GO:0006412">
    <property type="term" value="P:translation"/>
    <property type="evidence" value="ECO:0007669"/>
    <property type="project" value="UniProtKB-UniRule"/>
</dbReference>
<dbReference type="Gene3D" id="3.40.1370.10">
    <property type="match status" value="1"/>
</dbReference>
<dbReference type="HAMAP" id="MF_01328_B">
    <property type="entry name" value="Ribosomal_uL4_B"/>
    <property type="match status" value="1"/>
</dbReference>
<dbReference type="InterPro" id="IPR002136">
    <property type="entry name" value="Ribosomal_uL4"/>
</dbReference>
<dbReference type="InterPro" id="IPR013005">
    <property type="entry name" value="Ribosomal_uL4-like"/>
</dbReference>
<dbReference type="InterPro" id="IPR023574">
    <property type="entry name" value="Ribosomal_uL4_dom_sf"/>
</dbReference>
<dbReference type="NCBIfam" id="TIGR03953">
    <property type="entry name" value="rplD_bact"/>
    <property type="match status" value="1"/>
</dbReference>
<dbReference type="PANTHER" id="PTHR10746">
    <property type="entry name" value="50S RIBOSOMAL PROTEIN L4"/>
    <property type="match status" value="1"/>
</dbReference>
<dbReference type="PANTHER" id="PTHR10746:SF6">
    <property type="entry name" value="LARGE RIBOSOMAL SUBUNIT PROTEIN UL4M"/>
    <property type="match status" value="1"/>
</dbReference>
<dbReference type="Pfam" id="PF00573">
    <property type="entry name" value="Ribosomal_L4"/>
    <property type="match status" value="1"/>
</dbReference>
<dbReference type="SUPFAM" id="SSF52166">
    <property type="entry name" value="Ribosomal protein L4"/>
    <property type="match status" value="1"/>
</dbReference>